<gene>
    <name type="primary">CAM-2</name>
</gene>
<evidence type="ECO:0000250" key="1"/>
<evidence type="ECO:0000255" key="2">
    <source>
        <dbReference type="PROSITE-ProRule" id="PRU00448"/>
    </source>
</evidence>
<evidence type="ECO:0000305" key="3"/>
<evidence type="ECO:0007829" key="4">
    <source>
        <dbReference type="PDB" id="2RO9"/>
    </source>
</evidence>
<name>CALM2_SOYBN</name>
<sequence length="149" mass="16832">MADQLTDDQIAEFKEAFSLFDKDGDGCITTKELGTVMRSLGQNPTEAELQDMINEVDADGNGTIDFPEFLNLMARKMKDTDSEEELKEAFRVFDKDQNGFISAAELRHVMTNLGEKLTDEEVDEMIREADVDGDGQINYEEFVKVMMAK</sequence>
<proteinExistence type="evidence at protein level"/>
<reference key="1">
    <citation type="submission" date="1993-01" db="EMBL/GenBank/DDBJ databases">
        <title>Isolation and characterization of a soybean calmodulin multigene family.</title>
        <authorList>
            <person name="Lee S.H."/>
            <person name="Kim J.C."/>
            <person name="Choi Y.J."/>
            <person name="Bahk J.D."/>
            <person name="Hong J.C."/>
            <person name="Cho M.J."/>
        </authorList>
    </citation>
    <scope>NUCLEOTIDE SEQUENCE [MRNA]</scope>
    <source>
        <strain>cv. Williams</strain>
    </source>
</reference>
<keyword id="KW-0002">3D-structure</keyword>
<keyword id="KW-0007">Acetylation</keyword>
<keyword id="KW-0106">Calcium</keyword>
<keyword id="KW-0479">Metal-binding</keyword>
<keyword id="KW-0488">Methylation</keyword>
<keyword id="KW-1185">Reference proteome</keyword>
<keyword id="KW-0677">Repeat</keyword>
<accession>P62163</accession>
<accession>P13565</accession>
<dbReference type="EMBL" id="L01431">
    <property type="protein sequence ID" value="AAA03580.1"/>
    <property type="molecule type" value="mRNA"/>
</dbReference>
<dbReference type="RefSeq" id="NP_001237883.1">
    <property type="nucleotide sequence ID" value="NM_001250954.1"/>
</dbReference>
<dbReference type="PDB" id="2RO9">
    <property type="method" value="NMR"/>
    <property type="chains" value="A=81-149"/>
</dbReference>
<dbReference type="PDBsum" id="2RO9"/>
<dbReference type="SMR" id="P62163"/>
<dbReference type="FunCoup" id="P62163">
    <property type="interactions" value="5678"/>
</dbReference>
<dbReference type="STRING" id="3847.P62163"/>
<dbReference type="PaxDb" id="3847-GLYMA02G44350.1"/>
<dbReference type="ProMEX" id="P62163"/>
<dbReference type="GeneID" id="547786"/>
<dbReference type="KEGG" id="gmx:547786"/>
<dbReference type="eggNOG" id="KOG0027">
    <property type="taxonomic scope" value="Eukaryota"/>
</dbReference>
<dbReference type="InParanoid" id="P62163"/>
<dbReference type="OrthoDB" id="1340873at2759"/>
<dbReference type="EvolutionaryTrace" id="P62163"/>
<dbReference type="Proteomes" id="UP000008827">
    <property type="component" value="Unplaced"/>
</dbReference>
<dbReference type="GO" id="GO:0005737">
    <property type="term" value="C:cytoplasm"/>
    <property type="evidence" value="ECO:0000318"/>
    <property type="project" value="GO_Central"/>
</dbReference>
<dbReference type="GO" id="GO:0005509">
    <property type="term" value="F:calcium ion binding"/>
    <property type="evidence" value="ECO:0000318"/>
    <property type="project" value="GO_Central"/>
</dbReference>
<dbReference type="GO" id="GO:0030234">
    <property type="term" value="F:enzyme regulator activity"/>
    <property type="evidence" value="ECO:0000318"/>
    <property type="project" value="GO_Central"/>
</dbReference>
<dbReference type="CDD" id="cd00051">
    <property type="entry name" value="EFh"/>
    <property type="match status" value="2"/>
</dbReference>
<dbReference type="FunFam" id="1.10.238.10:FF:000034">
    <property type="entry name" value="Calmodulin"/>
    <property type="match status" value="1"/>
</dbReference>
<dbReference type="FunFam" id="1.10.238.10:FF:000042">
    <property type="entry name" value="Calmodulin"/>
    <property type="match status" value="1"/>
</dbReference>
<dbReference type="Gene3D" id="1.10.238.10">
    <property type="entry name" value="EF-hand"/>
    <property type="match status" value="3"/>
</dbReference>
<dbReference type="InterPro" id="IPR050230">
    <property type="entry name" value="CALM/Myosin/TropC-like"/>
</dbReference>
<dbReference type="InterPro" id="IPR011992">
    <property type="entry name" value="EF-hand-dom_pair"/>
</dbReference>
<dbReference type="InterPro" id="IPR018247">
    <property type="entry name" value="EF_Hand_1_Ca_BS"/>
</dbReference>
<dbReference type="InterPro" id="IPR002048">
    <property type="entry name" value="EF_hand_dom"/>
</dbReference>
<dbReference type="PANTHER" id="PTHR23048:SF53">
    <property type="entry name" value="CALMODULIN"/>
    <property type="match status" value="1"/>
</dbReference>
<dbReference type="PANTHER" id="PTHR23048">
    <property type="entry name" value="MYOSIN LIGHT CHAIN 1, 3"/>
    <property type="match status" value="1"/>
</dbReference>
<dbReference type="Pfam" id="PF13499">
    <property type="entry name" value="EF-hand_7"/>
    <property type="match status" value="2"/>
</dbReference>
<dbReference type="SMART" id="SM00054">
    <property type="entry name" value="EFh"/>
    <property type="match status" value="4"/>
</dbReference>
<dbReference type="SUPFAM" id="SSF47473">
    <property type="entry name" value="EF-hand"/>
    <property type="match status" value="1"/>
</dbReference>
<dbReference type="PROSITE" id="PS00018">
    <property type="entry name" value="EF_HAND_1"/>
    <property type="match status" value="4"/>
</dbReference>
<dbReference type="PROSITE" id="PS50222">
    <property type="entry name" value="EF_HAND_2"/>
    <property type="match status" value="4"/>
</dbReference>
<protein>
    <recommendedName>
        <fullName>Calmodulin-2</fullName>
        <shortName>CaM-2</shortName>
    </recommendedName>
</protein>
<organism>
    <name type="scientific">Glycine max</name>
    <name type="common">Soybean</name>
    <name type="synonym">Glycine hispida</name>
    <dbReference type="NCBI Taxonomy" id="3847"/>
    <lineage>
        <taxon>Eukaryota</taxon>
        <taxon>Viridiplantae</taxon>
        <taxon>Streptophyta</taxon>
        <taxon>Embryophyta</taxon>
        <taxon>Tracheophyta</taxon>
        <taxon>Spermatophyta</taxon>
        <taxon>Magnoliopsida</taxon>
        <taxon>eudicotyledons</taxon>
        <taxon>Gunneridae</taxon>
        <taxon>Pentapetalae</taxon>
        <taxon>rosids</taxon>
        <taxon>fabids</taxon>
        <taxon>Fabales</taxon>
        <taxon>Fabaceae</taxon>
        <taxon>Papilionoideae</taxon>
        <taxon>50 kb inversion clade</taxon>
        <taxon>NPAAA clade</taxon>
        <taxon>indigoferoid/millettioid clade</taxon>
        <taxon>Phaseoleae</taxon>
        <taxon>Glycine</taxon>
        <taxon>Glycine subgen. Soja</taxon>
    </lineage>
</organism>
<comment type="function">
    <text>Calmodulin mediates the control of a large number of enzymes, ion channels and other proteins by Ca(2+). Among the enzymes to be stimulated by the calmodulin-Ca(2+) complex are a number of protein kinases and phosphatases.</text>
</comment>
<comment type="miscellaneous">
    <text>This protein has four functional calcium-binding sites.</text>
</comment>
<comment type="similarity">
    <text evidence="3">Belongs to the calmodulin family.</text>
</comment>
<feature type="initiator methionine" description="Removed" evidence="1">
    <location>
        <position position="1"/>
    </location>
</feature>
<feature type="chain" id="PRO_0000198306" description="Calmodulin-2">
    <location>
        <begin position="2"/>
        <end position="149"/>
    </location>
</feature>
<feature type="domain" description="EF-hand 1" evidence="2">
    <location>
        <begin position="8"/>
        <end position="43"/>
    </location>
</feature>
<feature type="domain" description="EF-hand 2" evidence="2">
    <location>
        <begin position="44"/>
        <end position="79"/>
    </location>
</feature>
<feature type="domain" description="EF-hand 3" evidence="2">
    <location>
        <begin position="81"/>
        <end position="116"/>
    </location>
</feature>
<feature type="domain" description="EF-hand 4" evidence="2">
    <location>
        <begin position="117"/>
        <end position="149"/>
    </location>
</feature>
<feature type="binding site" evidence="2">
    <location>
        <position position="21"/>
    </location>
    <ligand>
        <name>Ca(2+)</name>
        <dbReference type="ChEBI" id="CHEBI:29108"/>
        <label>1</label>
    </ligand>
</feature>
<feature type="binding site" evidence="2">
    <location>
        <position position="23"/>
    </location>
    <ligand>
        <name>Ca(2+)</name>
        <dbReference type="ChEBI" id="CHEBI:29108"/>
        <label>1</label>
    </ligand>
</feature>
<feature type="binding site" evidence="2">
    <location>
        <position position="25"/>
    </location>
    <ligand>
        <name>Ca(2+)</name>
        <dbReference type="ChEBI" id="CHEBI:29108"/>
        <label>1</label>
    </ligand>
</feature>
<feature type="binding site" evidence="2">
    <location>
        <position position="27"/>
    </location>
    <ligand>
        <name>Ca(2+)</name>
        <dbReference type="ChEBI" id="CHEBI:29108"/>
        <label>1</label>
    </ligand>
</feature>
<feature type="binding site" evidence="2">
    <location>
        <position position="32"/>
    </location>
    <ligand>
        <name>Ca(2+)</name>
        <dbReference type="ChEBI" id="CHEBI:29108"/>
        <label>1</label>
    </ligand>
</feature>
<feature type="binding site" evidence="2">
    <location>
        <position position="57"/>
    </location>
    <ligand>
        <name>Ca(2+)</name>
        <dbReference type="ChEBI" id="CHEBI:29108"/>
        <label>2</label>
    </ligand>
</feature>
<feature type="binding site" evidence="2">
    <location>
        <position position="59"/>
    </location>
    <ligand>
        <name>Ca(2+)</name>
        <dbReference type="ChEBI" id="CHEBI:29108"/>
        <label>2</label>
    </ligand>
</feature>
<feature type="binding site" evidence="2">
    <location>
        <position position="61"/>
    </location>
    <ligand>
        <name>Ca(2+)</name>
        <dbReference type="ChEBI" id="CHEBI:29108"/>
        <label>2</label>
    </ligand>
</feature>
<feature type="binding site" evidence="2">
    <location>
        <position position="63"/>
    </location>
    <ligand>
        <name>Ca(2+)</name>
        <dbReference type="ChEBI" id="CHEBI:29108"/>
        <label>2</label>
    </ligand>
</feature>
<feature type="binding site" evidence="2">
    <location>
        <position position="68"/>
    </location>
    <ligand>
        <name>Ca(2+)</name>
        <dbReference type="ChEBI" id="CHEBI:29108"/>
        <label>2</label>
    </ligand>
</feature>
<feature type="binding site" evidence="2">
    <location>
        <position position="94"/>
    </location>
    <ligand>
        <name>Ca(2+)</name>
        <dbReference type="ChEBI" id="CHEBI:29108"/>
        <label>3</label>
    </ligand>
</feature>
<feature type="binding site" evidence="2">
    <location>
        <position position="96"/>
    </location>
    <ligand>
        <name>Ca(2+)</name>
        <dbReference type="ChEBI" id="CHEBI:29108"/>
        <label>3</label>
    </ligand>
</feature>
<feature type="binding site" evidence="2">
    <location>
        <position position="98"/>
    </location>
    <ligand>
        <name>Ca(2+)</name>
        <dbReference type="ChEBI" id="CHEBI:29108"/>
        <label>3</label>
    </ligand>
</feature>
<feature type="binding site" evidence="2">
    <location>
        <position position="105"/>
    </location>
    <ligand>
        <name>Ca(2+)</name>
        <dbReference type="ChEBI" id="CHEBI:29108"/>
        <label>3</label>
    </ligand>
</feature>
<feature type="binding site" evidence="2">
    <location>
        <position position="130"/>
    </location>
    <ligand>
        <name>Ca(2+)</name>
        <dbReference type="ChEBI" id="CHEBI:29108"/>
        <label>4</label>
    </ligand>
</feature>
<feature type="binding site" evidence="2">
    <location>
        <position position="132"/>
    </location>
    <ligand>
        <name>Ca(2+)</name>
        <dbReference type="ChEBI" id="CHEBI:29108"/>
        <label>4</label>
    </ligand>
</feature>
<feature type="binding site" evidence="2">
    <location>
        <position position="134"/>
    </location>
    <ligand>
        <name>Ca(2+)</name>
        <dbReference type="ChEBI" id="CHEBI:29108"/>
        <label>4</label>
    </ligand>
</feature>
<feature type="binding site" evidence="2">
    <location>
        <position position="136"/>
    </location>
    <ligand>
        <name>Ca(2+)</name>
        <dbReference type="ChEBI" id="CHEBI:29108"/>
        <label>4</label>
    </ligand>
</feature>
<feature type="binding site" evidence="2">
    <location>
        <position position="141"/>
    </location>
    <ligand>
        <name>Ca(2+)</name>
        <dbReference type="ChEBI" id="CHEBI:29108"/>
        <label>4</label>
    </ligand>
</feature>
<feature type="modified residue" description="N-acetylalanine" evidence="1">
    <location>
        <position position="2"/>
    </location>
</feature>
<feature type="modified residue" description="N6,N6,N6-trimethyllysine" evidence="1">
    <location>
        <position position="116"/>
    </location>
</feature>
<feature type="helix" evidence="4">
    <location>
        <begin position="82"/>
        <end position="93"/>
    </location>
</feature>
<feature type="strand" evidence="4">
    <location>
        <begin position="98"/>
        <end position="102"/>
    </location>
</feature>
<feature type="helix" evidence="4">
    <location>
        <begin position="103"/>
        <end position="112"/>
    </location>
</feature>
<feature type="helix" evidence="4">
    <location>
        <begin position="119"/>
        <end position="129"/>
    </location>
</feature>
<feature type="strand" evidence="4">
    <location>
        <begin position="134"/>
        <end position="138"/>
    </location>
</feature>
<feature type="helix" evidence="4">
    <location>
        <begin position="139"/>
        <end position="147"/>
    </location>
</feature>